<proteinExistence type="inferred from homology"/>
<dbReference type="EC" id="6.2.1.5" evidence="1"/>
<dbReference type="EMBL" id="BX640443">
    <property type="protein sequence ID" value="CAE32577.1"/>
    <property type="molecule type" value="Genomic_DNA"/>
</dbReference>
<dbReference type="RefSeq" id="WP_003812749.1">
    <property type="nucleotide sequence ID" value="NC_002927.3"/>
</dbReference>
<dbReference type="SMR" id="Q7WKM5"/>
<dbReference type="GeneID" id="93204423"/>
<dbReference type="KEGG" id="bbr:BB2081"/>
<dbReference type="eggNOG" id="COG0045">
    <property type="taxonomic scope" value="Bacteria"/>
</dbReference>
<dbReference type="HOGENOM" id="CLU_037430_0_2_4"/>
<dbReference type="UniPathway" id="UPA00223">
    <property type="reaction ID" value="UER00999"/>
</dbReference>
<dbReference type="Proteomes" id="UP000001027">
    <property type="component" value="Chromosome"/>
</dbReference>
<dbReference type="GO" id="GO:0005829">
    <property type="term" value="C:cytosol"/>
    <property type="evidence" value="ECO:0007669"/>
    <property type="project" value="TreeGrafter"/>
</dbReference>
<dbReference type="GO" id="GO:0042709">
    <property type="term" value="C:succinate-CoA ligase complex"/>
    <property type="evidence" value="ECO:0007669"/>
    <property type="project" value="TreeGrafter"/>
</dbReference>
<dbReference type="GO" id="GO:0005524">
    <property type="term" value="F:ATP binding"/>
    <property type="evidence" value="ECO:0007669"/>
    <property type="project" value="UniProtKB-UniRule"/>
</dbReference>
<dbReference type="GO" id="GO:0000287">
    <property type="term" value="F:magnesium ion binding"/>
    <property type="evidence" value="ECO:0007669"/>
    <property type="project" value="UniProtKB-UniRule"/>
</dbReference>
<dbReference type="GO" id="GO:0004775">
    <property type="term" value="F:succinate-CoA ligase (ADP-forming) activity"/>
    <property type="evidence" value="ECO:0007669"/>
    <property type="project" value="UniProtKB-UniRule"/>
</dbReference>
<dbReference type="GO" id="GO:0004776">
    <property type="term" value="F:succinate-CoA ligase (GDP-forming) activity"/>
    <property type="evidence" value="ECO:0007669"/>
    <property type="project" value="RHEA"/>
</dbReference>
<dbReference type="GO" id="GO:0006104">
    <property type="term" value="P:succinyl-CoA metabolic process"/>
    <property type="evidence" value="ECO:0007669"/>
    <property type="project" value="TreeGrafter"/>
</dbReference>
<dbReference type="GO" id="GO:0006099">
    <property type="term" value="P:tricarboxylic acid cycle"/>
    <property type="evidence" value="ECO:0007669"/>
    <property type="project" value="UniProtKB-UniRule"/>
</dbReference>
<dbReference type="FunFam" id="3.30.1490.20:FF:000002">
    <property type="entry name" value="Succinate--CoA ligase [ADP-forming] subunit beta"/>
    <property type="match status" value="1"/>
</dbReference>
<dbReference type="FunFam" id="3.30.470.20:FF:000002">
    <property type="entry name" value="Succinate--CoA ligase [ADP-forming] subunit beta"/>
    <property type="match status" value="1"/>
</dbReference>
<dbReference type="FunFam" id="3.40.50.261:FF:000001">
    <property type="entry name" value="Succinate--CoA ligase [ADP-forming] subunit beta"/>
    <property type="match status" value="1"/>
</dbReference>
<dbReference type="Gene3D" id="3.30.1490.20">
    <property type="entry name" value="ATP-grasp fold, A domain"/>
    <property type="match status" value="1"/>
</dbReference>
<dbReference type="Gene3D" id="3.30.470.20">
    <property type="entry name" value="ATP-grasp fold, B domain"/>
    <property type="match status" value="1"/>
</dbReference>
<dbReference type="Gene3D" id="3.40.50.261">
    <property type="entry name" value="Succinyl-CoA synthetase domains"/>
    <property type="match status" value="1"/>
</dbReference>
<dbReference type="HAMAP" id="MF_00558">
    <property type="entry name" value="Succ_CoA_beta"/>
    <property type="match status" value="1"/>
</dbReference>
<dbReference type="InterPro" id="IPR011761">
    <property type="entry name" value="ATP-grasp"/>
</dbReference>
<dbReference type="InterPro" id="IPR013650">
    <property type="entry name" value="ATP-grasp_succ-CoA_synth-type"/>
</dbReference>
<dbReference type="InterPro" id="IPR013815">
    <property type="entry name" value="ATP_grasp_subdomain_1"/>
</dbReference>
<dbReference type="InterPro" id="IPR017866">
    <property type="entry name" value="Succ-CoA_synthase_bsu_CS"/>
</dbReference>
<dbReference type="InterPro" id="IPR005811">
    <property type="entry name" value="SUCC_ACL_C"/>
</dbReference>
<dbReference type="InterPro" id="IPR005809">
    <property type="entry name" value="Succ_CoA_ligase-like_bsu"/>
</dbReference>
<dbReference type="InterPro" id="IPR016102">
    <property type="entry name" value="Succinyl-CoA_synth-like"/>
</dbReference>
<dbReference type="NCBIfam" id="NF001913">
    <property type="entry name" value="PRK00696.1"/>
    <property type="match status" value="1"/>
</dbReference>
<dbReference type="NCBIfam" id="TIGR01016">
    <property type="entry name" value="sucCoAbeta"/>
    <property type="match status" value="1"/>
</dbReference>
<dbReference type="PANTHER" id="PTHR11815:SF10">
    <property type="entry name" value="SUCCINATE--COA LIGASE [GDP-FORMING] SUBUNIT BETA, MITOCHONDRIAL"/>
    <property type="match status" value="1"/>
</dbReference>
<dbReference type="PANTHER" id="PTHR11815">
    <property type="entry name" value="SUCCINYL-COA SYNTHETASE BETA CHAIN"/>
    <property type="match status" value="1"/>
</dbReference>
<dbReference type="Pfam" id="PF08442">
    <property type="entry name" value="ATP-grasp_2"/>
    <property type="match status" value="1"/>
</dbReference>
<dbReference type="Pfam" id="PF00549">
    <property type="entry name" value="Ligase_CoA"/>
    <property type="match status" value="1"/>
</dbReference>
<dbReference type="PIRSF" id="PIRSF001554">
    <property type="entry name" value="SucCS_beta"/>
    <property type="match status" value="1"/>
</dbReference>
<dbReference type="SUPFAM" id="SSF56059">
    <property type="entry name" value="Glutathione synthetase ATP-binding domain-like"/>
    <property type="match status" value="1"/>
</dbReference>
<dbReference type="SUPFAM" id="SSF52210">
    <property type="entry name" value="Succinyl-CoA synthetase domains"/>
    <property type="match status" value="1"/>
</dbReference>
<dbReference type="PROSITE" id="PS50975">
    <property type="entry name" value="ATP_GRASP"/>
    <property type="match status" value="1"/>
</dbReference>
<dbReference type="PROSITE" id="PS01217">
    <property type="entry name" value="SUCCINYL_COA_LIG_3"/>
    <property type="match status" value="1"/>
</dbReference>
<evidence type="ECO:0000255" key="1">
    <source>
        <dbReference type="HAMAP-Rule" id="MF_00558"/>
    </source>
</evidence>
<reference key="1">
    <citation type="journal article" date="2003" name="Nat. Genet.">
        <title>Comparative analysis of the genome sequences of Bordetella pertussis, Bordetella parapertussis and Bordetella bronchiseptica.</title>
        <authorList>
            <person name="Parkhill J."/>
            <person name="Sebaihia M."/>
            <person name="Preston A."/>
            <person name="Murphy L.D."/>
            <person name="Thomson N.R."/>
            <person name="Harris D.E."/>
            <person name="Holden M.T.G."/>
            <person name="Churcher C.M."/>
            <person name="Bentley S.D."/>
            <person name="Mungall K.L."/>
            <person name="Cerdeno-Tarraga A.-M."/>
            <person name="Temple L."/>
            <person name="James K.D."/>
            <person name="Harris B."/>
            <person name="Quail M.A."/>
            <person name="Achtman M."/>
            <person name="Atkin R."/>
            <person name="Baker S."/>
            <person name="Basham D."/>
            <person name="Bason N."/>
            <person name="Cherevach I."/>
            <person name="Chillingworth T."/>
            <person name="Collins M."/>
            <person name="Cronin A."/>
            <person name="Davis P."/>
            <person name="Doggett J."/>
            <person name="Feltwell T."/>
            <person name="Goble A."/>
            <person name="Hamlin N."/>
            <person name="Hauser H."/>
            <person name="Holroyd S."/>
            <person name="Jagels K."/>
            <person name="Leather S."/>
            <person name="Moule S."/>
            <person name="Norberczak H."/>
            <person name="O'Neil S."/>
            <person name="Ormond D."/>
            <person name="Price C."/>
            <person name="Rabbinowitsch E."/>
            <person name="Rutter S."/>
            <person name="Sanders M."/>
            <person name="Saunders D."/>
            <person name="Seeger K."/>
            <person name="Sharp S."/>
            <person name="Simmonds M."/>
            <person name="Skelton J."/>
            <person name="Squares R."/>
            <person name="Squares S."/>
            <person name="Stevens K."/>
            <person name="Unwin L."/>
            <person name="Whitehead S."/>
            <person name="Barrell B.G."/>
            <person name="Maskell D.J."/>
        </authorList>
    </citation>
    <scope>NUCLEOTIDE SEQUENCE [LARGE SCALE GENOMIC DNA]</scope>
    <source>
        <strain>ATCC BAA-588 / NCTC 13252 / RB50</strain>
    </source>
</reference>
<name>SUCC_BORBR</name>
<keyword id="KW-0067">ATP-binding</keyword>
<keyword id="KW-0436">Ligase</keyword>
<keyword id="KW-0460">Magnesium</keyword>
<keyword id="KW-0479">Metal-binding</keyword>
<keyword id="KW-0547">Nucleotide-binding</keyword>
<keyword id="KW-0816">Tricarboxylic acid cycle</keyword>
<protein>
    <recommendedName>
        <fullName evidence="1">Succinate--CoA ligase [ADP-forming] subunit beta</fullName>
        <ecNumber evidence="1">6.2.1.5</ecNumber>
    </recommendedName>
    <alternativeName>
        <fullName evidence="1">Succinyl-CoA synthetase subunit beta</fullName>
        <shortName evidence="1">SCS-beta</shortName>
    </alternativeName>
</protein>
<sequence length="386" mass="40939">MKIHEYQGKELLKQFGVTVPRGIPAFSVDEAVAAAEKLGGPVWVVKAQIHAGGRGKGGGVKLGRSIDEVRQLSSEILGMQLVTHQTGPQGQKVRRLLIEEGADIKKEYYVGIVTDRGTQRVCVMASSEGGMDIEEVAAHSPEKILKVFVDPAAGLTDAEAAELARGIGVPEASVGKAAAEFQKLYKAYWDTDASLAEINPLILTGSGDIIALDAKFNFDSNALFRHPEIVAYRDLDEEDPAEIEASKFDLAYIQLDGNIGCLVNGAGLAMATMDTIKLFGGEPANFLDVGGGATAEKVTEAFKIMLKNKSVKAILVNIFGGIMRCDVIAEGVITACKAVNLNVPLVVRMKGTNEELGKKMLAESGLPIISADTMAEAATKVVAAVK</sequence>
<feature type="chain" id="PRO_1000082025" description="Succinate--CoA ligase [ADP-forming] subunit beta">
    <location>
        <begin position="1"/>
        <end position="386"/>
    </location>
</feature>
<feature type="domain" description="ATP-grasp" evidence="1">
    <location>
        <begin position="9"/>
        <end position="244"/>
    </location>
</feature>
<feature type="binding site" evidence="1">
    <location>
        <position position="46"/>
    </location>
    <ligand>
        <name>ATP</name>
        <dbReference type="ChEBI" id="CHEBI:30616"/>
    </ligand>
</feature>
<feature type="binding site" evidence="1">
    <location>
        <begin position="53"/>
        <end position="55"/>
    </location>
    <ligand>
        <name>ATP</name>
        <dbReference type="ChEBI" id="CHEBI:30616"/>
    </ligand>
</feature>
<feature type="binding site" evidence="1">
    <location>
        <position position="99"/>
    </location>
    <ligand>
        <name>ATP</name>
        <dbReference type="ChEBI" id="CHEBI:30616"/>
    </ligand>
</feature>
<feature type="binding site" evidence="1">
    <location>
        <position position="102"/>
    </location>
    <ligand>
        <name>ATP</name>
        <dbReference type="ChEBI" id="CHEBI:30616"/>
    </ligand>
</feature>
<feature type="binding site" evidence="1">
    <location>
        <position position="107"/>
    </location>
    <ligand>
        <name>ATP</name>
        <dbReference type="ChEBI" id="CHEBI:30616"/>
    </ligand>
</feature>
<feature type="binding site" evidence="1">
    <location>
        <position position="199"/>
    </location>
    <ligand>
        <name>Mg(2+)</name>
        <dbReference type="ChEBI" id="CHEBI:18420"/>
    </ligand>
</feature>
<feature type="binding site" evidence="1">
    <location>
        <position position="213"/>
    </location>
    <ligand>
        <name>Mg(2+)</name>
        <dbReference type="ChEBI" id="CHEBI:18420"/>
    </ligand>
</feature>
<feature type="binding site" evidence="1">
    <location>
        <position position="264"/>
    </location>
    <ligand>
        <name>substrate</name>
        <note>ligand shared with subunit alpha</note>
    </ligand>
</feature>
<feature type="binding site" evidence="1">
    <location>
        <begin position="321"/>
        <end position="323"/>
    </location>
    <ligand>
        <name>substrate</name>
        <note>ligand shared with subunit alpha</note>
    </ligand>
</feature>
<gene>
    <name evidence="1" type="primary">sucC</name>
    <name type="ordered locus">BB2081</name>
</gene>
<organism>
    <name type="scientific">Bordetella bronchiseptica (strain ATCC BAA-588 / NCTC 13252 / RB50)</name>
    <name type="common">Alcaligenes bronchisepticus</name>
    <dbReference type="NCBI Taxonomy" id="257310"/>
    <lineage>
        <taxon>Bacteria</taxon>
        <taxon>Pseudomonadati</taxon>
        <taxon>Pseudomonadota</taxon>
        <taxon>Betaproteobacteria</taxon>
        <taxon>Burkholderiales</taxon>
        <taxon>Alcaligenaceae</taxon>
        <taxon>Bordetella</taxon>
    </lineage>
</organism>
<accession>Q7WKM5</accession>
<comment type="function">
    <text evidence="1">Succinyl-CoA synthetase functions in the citric acid cycle (TCA), coupling the hydrolysis of succinyl-CoA to the synthesis of either ATP or GTP and thus represents the only step of substrate-level phosphorylation in the TCA. The beta subunit provides nucleotide specificity of the enzyme and binds the substrate succinate, while the binding sites for coenzyme A and phosphate are found in the alpha subunit.</text>
</comment>
<comment type="catalytic activity">
    <reaction evidence="1">
        <text>succinate + ATP + CoA = succinyl-CoA + ADP + phosphate</text>
        <dbReference type="Rhea" id="RHEA:17661"/>
        <dbReference type="ChEBI" id="CHEBI:30031"/>
        <dbReference type="ChEBI" id="CHEBI:30616"/>
        <dbReference type="ChEBI" id="CHEBI:43474"/>
        <dbReference type="ChEBI" id="CHEBI:57287"/>
        <dbReference type="ChEBI" id="CHEBI:57292"/>
        <dbReference type="ChEBI" id="CHEBI:456216"/>
        <dbReference type="EC" id="6.2.1.5"/>
    </reaction>
    <physiologicalReaction direction="right-to-left" evidence="1">
        <dbReference type="Rhea" id="RHEA:17663"/>
    </physiologicalReaction>
</comment>
<comment type="catalytic activity">
    <reaction evidence="1">
        <text>GTP + succinate + CoA = succinyl-CoA + GDP + phosphate</text>
        <dbReference type="Rhea" id="RHEA:22120"/>
        <dbReference type="ChEBI" id="CHEBI:30031"/>
        <dbReference type="ChEBI" id="CHEBI:37565"/>
        <dbReference type="ChEBI" id="CHEBI:43474"/>
        <dbReference type="ChEBI" id="CHEBI:57287"/>
        <dbReference type="ChEBI" id="CHEBI:57292"/>
        <dbReference type="ChEBI" id="CHEBI:58189"/>
    </reaction>
    <physiologicalReaction direction="right-to-left" evidence="1">
        <dbReference type="Rhea" id="RHEA:22122"/>
    </physiologicalReaction>
</comment>
<comment type="cofactor">
    <cofactor evidence="1">
        <name>Mg(2+)</name>
        <dbReference type="ChEBI" id="CHEBI:18420"/>
    </cofactor>
    <text evidence="1">Binds 1 Mg(2+) ion per subunit.</text>
</comment>
<comment type="pathway">
    <text evidence="1">Carbohydrate metabolism; tricarboxylic acid cycle; succinate from succinyl-CoA (ligase route): step 1/1.</text>
</comment>
<comment type="subunit">
    <text evidence="1">Heterotetramer of two alpha and two beta subunits.</text>
</comment>
<comment type="similarity">
    <text evidence="1">Belongs to the succinate/malate CoA ligase beta subunit family.</text>
</comment>